<reference key="1">
    <citation type="journal article" date="2001" name="Nature">
        <title>Genome sequence of enterohaemorrhagic Escherichia coli O157:H7.</title>
        <authorList>
            <person name="Perna N.T."/>
            <person name="Plunkett G. III"/>
            <person name="Burland V."/>
            <person name="Mau B."/>
            <person name="Glasner J.D."/>
            <person name="Rose D.J."/>
            <person name="Mayhew G.F."/>
            <person name="Evans P.S."/>
            <person name="Gregor J."/>
            <person name="Kirkpatrick H.A."/>
            <person name="Posfai G."/>
            <person name="Hackett J."/>
            <person name="Klink S."/>
            <person name="Boutin A."/>
            <person name="Shao Y."/>
            <person name="Miller L."/>
            <person name="Grotbeck E.J."/>
            <person name="Davis N.W."/>
            <person name="Lim A."/>
            <person name="Dimalanta E.T."/>
            <person name="Potamousis K."/>
            <person name="Apodaca J."/>
            <person name="Anantharaman T.S."/>
            <person name="Lin J."/>
            <person name="Yen G."/>
            <person name="Schwartz D.C."/>
            <person name="Welch R.A."/>
            <person name="Blattner F.R."/>
        </authorList>
    </citation>
    <scope>NUCLEOTIDE SEQUENCE [LARGE SCALE GENOMIC DNA]</scope>
    <source>
        <strain>O157:H7 / EDL933 / ATCC 700927 / EHEC</strain>
    </source>
</reference>
<reference key="2">
    <citation type="journal article" date="2001" name="DNA Res.">
        <title>Complete genome sequence of enterohemorrhagic Escherichia coli O157:H7 and genomic comparison with a laboratory strain K-12.</title>
        <authorList>
            <person name="Hayashi T."/>
            <person name="Makino K."/>
            <person name="Ohnishi M."/>
            <person name="Kurokawa K."/>
            <person name="Ishii K."/>
            <person name="Yokoyama K."/>
            <person name="Han C.-G."/>
            <person name="Ohtsubo E."/>
            <person name="Nakayama K."/>
            <person name="Murata T."/>
            <person name="Tanaka M."/>
            <person name="Tobe T."/>
            <person name="Iida T."/>
            <person name="Takami H."/>
            <person name="Honda T."/>
            <person name="Sasakawa C."/>
            <person name="Ogasawara N."/>
            <person name="Yasunaga T."/>
            <person name="Kuhara S."/>
            <person name="Shiba T."/>
            <person name="Hattori M."/>
            <person name="Shinagawa H."/>
        </authorList>
    </citation>
    <scope>NUCLEOTIDE SEQUENCE [LARGE SCALE GENOMIC DNA]</scope>
    <source>
        <strain>O157:H7 / Sakai / RIMD 0509952 / EHEC</strain>
    </source>
</reference>
<dbReference type="EMBL" id="AE005174">
    <property type="protein sequence ID" value="AAG58319.1"/>
    <property type="molecule type" value="Genomic_DNA"/>
</dbReference>
<dbReference type="EMBL" id="BA000007">
    <property type="protein sequence ID" value="BAB37487.1"/>
    <property type="molecule type" value="Genomic_DNA"/>
</dbReference>
<dbReference type="PIR" id="C85982">
    <property type="entry name" value="C85982"/>
</dbReference>
<dbReference type="PIR" id="H91136">
    <property type="entry name" value="H91136"/>
</dbReference>
<dbReference type="RefSeq" id="NP_312091.1">
    <property type="nucleotide sequence ID" value="NC_002695.1"/>
</dbReference>
<dbReference type="RefSeq" id="WP_000940595.1">
    <property type="nucleotide sequence ID" value="NZ_VOAI01000014.1"/>
</dbReference>
<dbReference type="EMDB" id="EMD-42504"/>
<dbReference type="EMDB" id="EMD-43929"/>
<dbReference type="EMDB" id="EMD-45569"/>
<dbReference type="EMDB" id="EMD-45572"/>
<dbReference type="EMDB" id="EMD-45573"/>
<dbReference type="EMDB" id="EMD-48479"/>
<dbReference type="EMDB" id="EMD-48513"/>
<dbReference type="SMR" id="P0A7M0"/>
<dbReference type="STRING" id="155864.Z4547"/>
<dbReference type="GeneID" id="916093"/>
<dbReference type="GeneID" id="93778796"/>
<dbReference type="KEGG" id="ece:Z4547"/>
<dbReference type="KEGG" id="ecs:ECs_4064"/>
<dbReference type="PATRIC" id="fig|386585.9.peg.4243"/>
<dbReference type="eggNOG" id="COG0211">
    <property type="taxonomic scope" value="Bacteria"/>
</dbReference>
<dbReference type="HOGENOM" id="CLU_095424_4_1_6"/>
<dbReference type="OMA" id="GKDHTLH"/>
<dbReference type="Proteomes" id="UP000000558">
    <property type="component" value="Chromosome"/>
</dbReference>
<dbReference type="Proteomes" id="UP000002519">
    <property type="component" value="Chromosome"/>
</dbReference>
<dbReference type="GO" id="GO:0022625">
    <property type="term" value="C:cytosolic large ribosomal subunit"/>
    <property type="evidence" value="ECO:0007669"/>
    <property type="project" value="TreeGrafter"/>
</dbReference>
<dbReference type="GO" id="GO:0003735">
    <property type="term" value="F:structural constituent of ribosome"/>
    <property type="evidence" value="ECO:0007669"/>
    <property type="project" value="InterPro"/>
</dbReference>
<dbReference type="GO" id="GO:0006412">
    <property type="term" value="P:translation"/>
    <property type="evidence" value="ECO:0007669"/>
    <property type="project" value="UniProtKB-UniRule"/>
</dbReference>
<dbReference type="FunFam" id="2.40.50.100:FF:000001">
    <property type="entry name" value="50S ribosomal protein L27"/>
    <property type="match status" value="1"/>
</dbReference>
<dbReference type="Gene3D" id="2.40.50.100">
    <property type="match status" value="1"/>
</dbReference>
<dbReference type="HAMAP" id="MF_00539">
    <property type="entry name" value="Ribosomal_bL27"/>
    <property type="match status" value="1"/>
</dbReference>
<dbReference type="InterPro" id="IPR001684">
    <property type="entry name" value="Ribosomal_bL27"/>
</dbReference>
<dbReference type="InterPro" id="IPR018261">
    <property type="entry name" value="Ribosomal_bL27_CS"/>
</dbReference>
<dbReference type="NCBIfam" id="TIGR00062">
    <property type="entry name" value="L27"/>
    <property type="match status" value="1"/>
</dbReference>
<dbReference type="PANTHER" id="PTHR15893:SF0">
    <property type="entry name" value="LARGE RIBOSOMAL SUBUNIT PROTEIN BL27M"/>
    <property type="match status" value="1"/>
</dbReference>
<dbReference type="PANTHER" id="PTHR15893">
    <property type="entry name" value="RIBOSOMAL PROTEIN L27"/>
    <property type="match status" value="1"/>
</dbReference>
<dbReference type="Pfam" id="PF01016">
    <property type="entry name" value="Ribosomal_L27"/>
    <property type="match status" value="1"/>
</dbReference>
<dbReference type="PRINTS" id="PR00063">
    <property type="entry name" value="RIBOSOMALL27"/>
</dbReference>
<dbReference type="SUPFAM" id="SSF110324">
    <property type="entry name" value="Ribosomal L27 protein-like"/>
    <property type="match status" value="1"/>
</dbReference>
<dbReference type="PROSITE" id="PS00831">
    <property type="entry name" value="RIBOSOMAL_L27"/>
    <property type="match status" value="1"/>
</dbReference>
<protein>
    <recommendedName>
        <fullName evidence="3">Large ribosomal subunit protein bL27</fullName>
    </recommendedName>
    <alternativeName>
        <fullName>50S ribosomal protein L27</fullName>
    </alternativeName>
</protein>
<sequence>MAHKKAGGSTRNGRDSEAKRLGVKRFGGESVLAGSIIVRQRGTKFHAGANVGCGRDHTLFAKADGKVKFEVKGPKNRKFISIEAE</sequence>
<proteinExistence type="inferred from homology"/>
<gene>
    <name type="primary">rpmA</name>
    <name type="ordered locus">Z4547</name>
    <name type="ordered locus">ECs4064</name>
</gene>
<name>RL27_ECO57</name>
<feature type="initiator methionine" description="Removed" evidence="1">
    <location>
        <position position="1"/>
    </location>
</feature>
<feature type="chain" id="PRO_0000181086" description="Large ribosomal subunit protein bL27">
    <location>
        <begin position="2"/>
        <end position="85"/>
    </location>
</feature>
<feature type="region of interest" description="Disordered" evidence="2">
    <location>
        <begin position="1"/>
        <end position="20"/>
    </location>
</feature>
<accession>P0A7M0</accession>
<accession>P02427</accession>
<comment type="similarity">
    <text evidence="3">Belongs to the bacterial ribosomal protein bL27 family.</text>
</comment>
<keyword id="KW-1185">Reference proteome</keyword>
<keyword id="KW-0687">Ribonucleoprotein</keyword>
<keyword id="KW-0689">Ribosomal protein</keyword>
<organism>
    <name type="scientific">Escherichia coli O157:H7</name>
    <dbReference type="NCBI Taxonomy" id="83334"/>
    <lineage>
        <taxon>Bacteria</taxon>
        <taxon>Pseudomonadati</taxon>
        <taxon>Pseudomonadota</taxon>
        <taxon>Gammaproteobacteria</taxon>
        <taxon>Enterobacterales</taxon>
        <taxon>Enterobacteriaceae</taxon>
        <taxon>Escherichia</taxon>
    </lineage>
</organism>
<evidence type="ECO:0000250" key="1"/>
<evidence type="ECO:0000256" key="2">
    <source>
        <dbReference type="SAM" id="MobiDB-lite"/>
    </source>
</evidence>
<evidence type="ECO:0000305" key="3"/>